<protein>
    <recommendedName>
        <fullName evidence="1">Uracil-DNA glycosylase</fullName>
        <shortName evidence="1">UDG</shortName>
        <ecNumber evidence="1">3.2.2.27</ecNumber>
    </recommendedName>
</protein>
<sequence>MANELTWHDVLAEEKQQPYFLNTLQTVASERQSGVTIYPPQKDVFNAFRFTELGDVKVVILGQDPYHGPGQAHGLAFSVRPGIATPPSLLNMYKELENTIPGFTRPNHGYLESWARQGVLLLNTVLTVRAGQAHSHASLGWETFTDKVISLINQHREGVVFLLWGSHAQKKGAIIDKQRHHVLKAPHPSPLSAHRGFFGCNHFVLANQWLEQRGETPIDWMPVLPAESE</sequence>
<evidence type="ECO:0000255" key="1">
    <source>
        <dbReference type="HAMAP-Rule" id="MF_00148"/>
    </source>
</evidence>
<keyword id="KW-0963">Cytoplasm</keyword>
<keyword id="KW-0227">DNA damage</keyword>
<keyword id="KW-0234">DNA repair</keyword>
<keyword id="KW-0378">Hydrolase</keyword>
<gene>
    <name evidence="1" type="primary">ung</name>
    <name type="ordered locus">UTI89_C2902</name>
</gene>
<organism>
    <name type="scientific">Escherichia coli (strain UTI89 / UPEC)</name>
    <dbReference type="NCBI Taxonomy" id="364106"/>
    <lineage>
        <taxon>Bacteria</taxon>
        <taxon>Pseudomonadati</taxon>
        <taxon>Pseudomonadota</taxon>
        <taxon>Gammaproteobacteria</taxon>
        <taxon>Enterobacterales</taxon>
        <taxon>Enterobacteriaceae</taxon>
        <taxon>Escherichia</taxon>
    </lineage>
</organism>
<dbReference type="EC" id="3.2.2.27" evidence="1"/>
<dbReference type="EMBL" id="CP000243">
    <property type="protein sequence ID" value="ABE08362.1"/>
    <property type="molecule type" value="Genomic_DNA"/>
</dbReference>
<dbReference type="RefSeq" id="WP_001262723.1">
    <property type="nucleotide sequence ID" value="NZ_CP064825.1"/>
</dbReference>
<dbReference type="SMR" id="Q1R8F2"/>
<dbReference type="GeneID" id="75206274"/>
<dbReference type="KEGG" id="eci:UTI89_C2902"/>
<dbReference type="HOGENOM" id="CLU_032162_3_0_6"/>
<dbReference type="Proteomes" id="UP000001952">
    <property type="component" value="Chromosome"/>
</dbReference>
<dbReference type="GO" id="GO:0005737">
    <property type="term" value="C:cytoplasm"/>
    <property type="evidence" value="ECO:0007669"/>
    <property type="project" value="UniProtKB-SubCell"/>
</dbReference>
<dbReference type="GO" id="GO:0004844">
    <property type="term" value="F:uracil DNA N-glycosylase activity"/>
    <property type="evidence" value="ECO:0007669"/>
    <property type="project" value="UniProtKB-UniRule"/>
</dbReference>
<dbReference type="GO" id="GO:0097510">
    <property type="term" value="P:base-excision repair, AP site formation via deaminated base removal"/>
    <property type="evidence" value="ECO:0007669"/>
    <property type="project" value="TreeGrafter"/>
</dbReference>
<dbReference type="CDD" id="cd10027">
    <property type="entry name" value="UDG-F1-like"/>
    <property type="match status" value="1"/>
</dbReference>
<dbReference type="FunFam" id="3.40.470.10:FF:000001">
    <property type="entry name" value="Uracil-DNA glycosylase"/>
    <property type="match status" value="1"/>
</dbReference>
<dbReference type="Gene3D" id="3.40.470.10">
    <property type="entry name" value="Uracil-DNA glycosylase-like domain"/>
    <property type="match status" value="1"/>
</dbReference>
<dbReference type="HAMAP" id="MF_00148">
    <property type="entry name" value="UDG"/>
    <property type="match status" value="1"/>
</dbReference>
<dbReference type="InterPro" id="IPR002043">
    <property type="entry name" value="UDG_fam1"/>
</dbReference>
<dbReference type="InterPro" id="IPR018085">
    <property type="entry name" value="Ura-DNA_Glyclase_AS"/>
</dbReference>
<dbReference type="InterPro" id="IPR005122">
    <property type="entry name" value="Uracil-DNA_glycosylase-like"/>
</dbReference>
<dbReference type="InterPro" id="IPR036895">
    <property type="entry name" value="Uracil-DNA_glycosylase-like_sf"/>
</dbReference>
<dbReference type="NCBIfam" id="NF003588">
    <property type="entry name" value="PRK05254.1-1"/>
    <property type="match status" value="1"/>
</dbReference>
<dbReference type="NCBIfam" id="NF003589">
    <property type="entry name" value="PRK05254.1-2"/>
    <property type="match status" value="1"/>
</dbReference>
<dbReference type="NCBIfam" id="NF003591">
    <property type="entry name" value="PRK05254.1-4"/>
    <property type="match status" value="1"/>
</dbReference>
<dbReference type="NCBIfam" id="NF003592">
    <property type="entry name" value="PRK05254.1-5"/>
    <property type="match status" value="1"/>
</dbReference>
<dbReference type="NCBIfam" id="TIGR00628">
    <property type="entry name" value="ung"/>
    <property type="match status" value="1"/>
</dbReference>
<dbReference type="PANTHER" id="PTHR11264">
    <property type="entry name" value="URACIL-DNA GLYCOSYLASE"/>
    <property type="match status" value="1"/>
</dbReference>
<dbReference type="PANTHER" id="PTHR11264:SF0">
    <property type="entry name" value="URACIL-DNA GLYCOSYLASE"/>
    <property type="match status" value="1"/>
</dbReference>
<dbReference type="Pfam" id="PF03167">
    <property type="entry name" value="UDG"/>
    <property type="match status" value="1"/>
</dbReference>
<dbReference type="SMART" id="SM00986">
    <property type="entry name" value="UDG"/>
    <property type="match status" value="1"/>
</dbReference>
<dbReference type="SMART" id="SM00987">
    <property type="entry name" value="UreE_C"/>
    <property type="match status" value="1"/>
</dbReference>
<dbReference type="SUPFAM" id="SSF52141">
    <property type="entry name" value="Uracil-DNA glycosylase-like"/>
    <property type="match status" value="1"/>
</dbReference>
<dbReference type="PROSITE" id="PS00130">
    <property type="entry name" value="U_DNA_GLYCOSYLASE"/>
    <property type="match status" value="1"/>
</dbReference>
<name>UNG_ECOUT</name>
<proteinExistence type="inferred from homology"/>
<reference key="1">
    <citation type="journal article" date="2006" name="Proc. Natl. Acad. Sci. U.S.A.">
        <title>Identification of genes subject to positive selection in uropathogenic strains of Escherichia coli: a comparative genomics approach.</title>
        <authorList>
            <person name="Chen S.L."/>
            <person name="Hung C.-S."/>
            <person name="Xu J."/>
            <person name="Reigstad C.S."/>
            <person name="Magrini V."/>
            <person name="Sabo A."/>
            <person name="Blasiar D."/>
            <person name="Bieri T."/>
            <person name="Meyer R.R."/>
            <person name="Ozersky P."/>
            <person name="Armstrong J.R."/>
            <person name="Fulton R.S."/>
            <person name="Latreille J.P."/>
            <person name="Spieth J."/>
            <person name="Hooton T.M."/>
            <person name="Mardis E.R."/>
            <person name="Hultgren S.J."/>
            <person name="Gordon J.I."/>
        </authorList>
    </citation>
    <scope>NUCLEOTIDE SEQUENCE [LARGE SCALE GENOMIC DNA]</scope>
    <source>
        <strain>UTI89 / UPEC</strain>
    </source>
</reference>
<accession>Q1R8F2</accession>
<comment type="function">
    <text evidence="1">Excises uracil residues from the DNA which can arise as a result of misincorporation of dUMP residues by DNA polymerase or due to deamination of cytosine.</text>
</comment>
<comment type="catalytic activity">
    <reaction evidence="1">
        <text>Hydrolyzes single-stranded DNA or mismatched double-stranded DNA and polynucleotides, releasing free uracil.</text>
        <dbReference type="EC" id="3.2.2.27"/>
    </reaction>
</comment>
<comment type="subcellular location">
    <subcellularLocation>
        <location evidence="1">Cytoplasm</location>
    </subcellularLocation>
</comment>
<comment type="similarity">
    <text evidence="1">Belongs to the uracil-DNA glycosylase (UDG) superfamily. UNG family.</text>
</comment>
<feature type="chain" id="PRO_1000009887" description="Uracil-DNA glycosylase">
    <location>
        <begin position="1"/>
        <end position="229"/>
    </location>
</feature>
<feature type="active site" description="Proton acceptor" evidence="1">
    <location>
        <position position="64"/>
    </location>
</feature>